<protein>
    <recommendedName>
        <fullName evidence="13">Occludin</fullName>
    </recommendedName>
</protein>
<proteinExistence type="evidence at protein level"/>
<dbReference type="EMBL" id="U49185">
    <property type="protein sequence ID" value="AAC52515.1"/>
    <property type="molecule type" value="mRNA"/>
</dbReference>
<dbReference type="EMBL" id="AK019880">
    <property type="protein sequence ID" value="BAB31900.1"/>
    <property type="molecule type" value="mRNA"/>
</dbReference>
<dbReference type="EMBL" id="AK042576">
    <property type="protein sequence ID" value="BAC31298.1"/>
    <property type="molecule type" value="mRNA"/>
</dbReference>
<dbReference type="CCDS" id="CCDS26731.1"/>
<dbReference type="RefSeq" id="NP_001347465.1">
    <property type="nucleotide sequence ID" value="NM_001360536.1"/>
</dbReference>
<dbReference type="RefSeq" id="NP_001347466.1">
    <property type="nucleotide sequence ID" value="NM_001360537.1"/>
</dbReference>
<dbReference type="RefSeq" id="NP_001347467.1">
    <property type="nucleotide sequence ID" value="NM_001360538.1"/>
</dbReference>
<dbReference type="RefSeq" id="NP_032782.1">
    <property type="nucleotide sequence ID" value="NM_008756.2"/>
</dbReference>
<dbReference type="RefSeq" id="XP_006517626.1">
    <property type="nucleotide sequence ID" value="XM_006517563.3"/>
</dbReference>
<dbReference type="RefSeq" id="XP_006517627.1">
    <property type="nucleotide sequence ID" value="XM_006517564.3"/>
</dbReference>
<dbReference type="RefSeq" id="XP_006517629.1">
    <property type="nucleotide sequence ID" value="XM_006517566.2"/>
</dbReference>
<dbReference type="RefSeq" id="XP_011242936.1">
    <property type="nucleotide sequence ID" value="XM_011244634.2"/>
</dbReference>
<dbReference type="SMR" id="Q61146"/>
<dbReference type="BioGRID" id="201894">
    <property type="interactions" value="9"/>
</dbReference>
<dbReference type="CORUM" id="Q61146"/>
<dbReference type="DIP" id="DIP-49005N"/>
<dbReference type="FunCoup" id="Q61146">
    <property type="interactions" value="386"/>
</dbReference>
<dbReference type="IntAct" id="Q61146">
    <property type="interactions" value="1"/>
</dbReference>
<dbReference type="STRING" id="10090.ENSMUSP00000065284"/>
<dbReference type="iPTMnet" id="Q61146"/>
<dbReference type="PhosphoSitePlus" id="Q61146"/>
<dbReference type="CPTAC" id="non-CPTAC-4054"/>
<dbReference type="PaxDb" id="10090-ENSMUSP00000065284"/>
<dbReference type="ProteomicsDB" id="294266"/>
<dbReference type="Antibodypedia" id="782">
    <property type="antibodies" value="556 antibodies from 40 providers"/>
</dbReference>
<dbReference type="DNASU" id="18260"/>
<dbReference type="Ensembl" id="ENSMUST00000022140.12">
    <property type="protein sequence ID" value="ENSMUSP00000022140.6"/>
    <property type="gene ID" value="ENSMUSG00000021638.13"/>
</dbReference>
<dbReference type="Ensembl" id="ENSMUST00000069756.11">
    <property type="protein sequence ID" value="ENSMUSP00000065284.5"/>
    <property type="gene ID" value="ENSMUSG00000021638.13"/>
</dbReference>
<dbReference type="Ensembl" id="ENSMUST00000160859.8">
    <property type="protein sequence ID" value="ENSMUSP00000124849.2"/>
    <property type="gene ID" value="ENSMUSG00000021638.13"/>
</dbReference>
<dbReference type="GeneID" id="18260"/>
<dbReference type="KEGG" id="mmu:18260"/>
<dbReference type="UCSC" id="uc007rqy.1">
    <property type="organism name" value="mouse"/>
</dbReference>
<dbReference type="AGR" id="MGI:106183"/>
<dbReference type="CTD" id="100506658"/>
<dbReference type="MGI" id="MGI:106183">
    <property type="gene designation" value="Ocln"/>
</dbReference>
<dbReference type="VEuPathDB" id="HostDB:ENSMUSG00000021638"/>
<dbReference type="eggNOG" id="ENOG502QS9F">
    <property type="taxonomic scope" value="Eukaryota"/>
</dbReference>
<dbReference type="GeneTree" id="ENSGT00730000110989"/>
<dbReference type="HOGENOM" id="CLU_039628_1_0_1"/>
<dbReference type="InParanoid" id="Q61146"/>
<dbReference type="OMA" id="QIYMLCS"/>
<dbReference type="OrthoDB" id="8867927at2759"/>
<dbReference type="PhylomeDB" id="Q61146"/>
<dbReference type="TreeFam" id="TF326161"/>
<dbReference type="Reactome" id="R-MMU-351906">
    <property type="pathway name" value="Apoptotic cleavage of cell adhesion proteins"/>
</dbReference>
<dbReference type="BioGRID-ORCS" id="18260">
    <property type="hits" value="3 hits in 76 CRISPR screens"/>
</dbReference>
<dbReference type="ChiTaRS" id="Ocln">
    <property type="organism name" value="mouse"/>
</dbReference>
<dbReference type="PRO" id="PR:Q61146"/>
<dbReference type="Proteomes" id="UP000000589">
    <property type="component" value="Chromosome 13"/>
</dbReference>
<dbReference type="RNAct" id="Q61146">
    <property type="molecule type" value="protein"/>
</dbReference>
<dbReference type="Bgee" id="ENSMUSG00000021638">
    <property type="expression patterns" value="Expressed in brain blood vessel and 184 other cell types or tissues"/>
</dbReference>
<dbReference type="ExpressionAtlas" id="Q61146">
    <property type="expression patterns" value="baseline and differential"/>
</dbReference>
<dbReference type="GO" id="GO:0016324">
    <property type="term" value="C:apical plasma membrane"/>
    <property type="evidence" value="ECO:0000314"/>
    <property type="project" value="MGI"/>
</dbReference>
<dbReference type="GO" id="GO:0016327">
    <property type="term" value="C:apicolateral plasma membrane"/>
    <property type="evidence" value="ECO:0000314"/>
    <property type="project" value="MGI"/>
</dbReference>
<dbReference type="GO" id="GO:0005923">
    <property type="term" value="C:bicellular tight junction"/>
    <property type="evidence" value="ECO:0000314"/>
    <property type="project" value="UniProtKB"/>
</dbReference>
<dbReference type="GO" id="GO:0030054">
    <property type="term" value="C:cell junction"/>
    <property type="evidence" value="ECO:0000266"/>
    <property type="project" value="MGI"/>
</dbReference>
<dbReference type="GO" id="GO:0009986">
    <property type="term" value="C:cell surface"/>
    <property type="evidence" value="ECO:0000266"/>
    <property type="project" value="MGI"/>
</dbReference>
<dbReference type="GO" id="GO:0005911">
    <property type="term" value="C:cell-cell junction"/>
    <property type="evidence" value="ECO:0000314"/>
    <property type="project" value="ARUK-UCL"/>
</dbReference>
<dbReference type="GO" id="GO:0030139">
    <property type="term" value="C:endocytic vesicle"/>
    <property type="evidence" value="ECO:0000314"/>
    <property type="project" value="UniProtKB"/>
</dbReference>
<dbReference type="GO" id="GO:0005765">
    <property type="term" value="C:lysosomal membrane"/>
    <property type="evidence" value="ECO:0007669"/>
    <property type="project" value="Ensembl"/>
</dbReference>
<dbReference type="GO" id="GO:0005886">
    <property type="term" value="C:plasma membrane"/>
    <property type="evidence" value="ECO:0000314"/>
    <property type="project" value="UniProtKB"/>
</dbReference>
<dbReference type="GO" id="GO:0032991">
    <property type="term" value="C:protein-containing complex"/>
    <property type="evidence" value="ECO:0007669"/>
    <property type="project" value="Ensembl"/>
</dbReference>
<dbReference type="GO" id="GO:0070160">
    <property type="term" value="C:tight junction"/>
    <property type="evidence" value="ECO:0000314"/>
    <property type="project" value="UniProtKB"/>
</dbReference>
<dbReference type="GO" id="GO:0019904">
    <property type="term" value="F:protein domain specific binding"/>
    <property type="evidence" value="ECO:0007669"/>
    <property type="project" value="Ensembl"/>
</dbReference>
<dbReference type="GO" id="GO:0070830">
    <property type="term" value="P:bicellular tight junction assembly"/>
    <property type="evidence" value="ECO:0007669"/>
    <property type="project" value="Ensembl"/>
</dbReference>
<dbReference type="GO" id="GO:0045216">
    <property type="term" value="P:cell-cell junction organization"/>
    <property type="evidence" value="ECO:0000266"/>
    <property type="project" value="MGI"/>
</dbReference>
<dbReference type="GO" id="GO:0010629">
    <property type="term" value="P:negative regulation of gene expression"/>
    <property type="evidence" value="ECO:0000315"/>
    <property type="project" value="ARUK-UCL"/>
</dbReference>
<dbReference type="GO" id="GO:1905605">
    <property type="term" value="P:positive regulation of blood-brain barrier permeability"/>
    <property type="evidence" value="ECO:0007669"/>
    <property type="project" value="Ensembl"/>
</dbReference>
<dbReference type="GO" id="GO:0046326">
    <property type="term" value="P:positive regulation of D-glucose import"/>
    <property type="evidence" value="ECO:0007669"/>
    <property type="project" value="Ensembl"/>
</dbReference>
<dbReference type="GO" id="GO:0010628">
    <property type="term" value="P:positive regulation of gene expression"/>
    <property type="evidence" value="ECO:0007669"/>
    <property type="project" value="Ensembl"/>
</dbReference>
<dbReference type="GO" id="GO:0120193">
    <property type="term" value="P:tight junction organization"/>
    <property type="evidence" value="ECO:0000315"/>
    <property type="project" value="ARUK-UCL"/>
</dbReference>
<dbReference type="Gene3D" id="6.10.140.340">
    <property type="match status" value="1"/>
</dbReference>
<dbReference type="InterPro" id="IPR031176">
    <property type="entry name" value="ELL/occludin"/>
</dbReference>
<dbReference type="InterPro" id="IPR008253">
    <property type="entry name" value="Marvel"/>
</dbReference>
<dbReference type="InterPro" id="IPR002958">
    <property type="entry name" value="Occludin"/>
</dbReference>
<dbReference type="InterPro" id="IPR010844">
    <property type="entry name" value="Occludin_ELL"/>
</dbReference>
<dbReference type="PANTHER" id="PTHR23288:SF4">
    <property type="entry name" value="OCCLUDIN"/>
    <property type="match status" value="1"/>
</dbReference>
<dbReference type="PANTHER" id="PTHR23288">
    <property type="entry name" value="OCCLUDIN AND RNA POLYMERASE II ELONGATION FACTOR ELL"/>
    <property type="match status" value="1"/>
</dbReference>
<dbReference type="Pfam" id="PF01284">
    <property type="entry name" value="MARVEL"/>
    <property type="match status" value="1"/>
</dbReference>
<dbReference type="Pfam" id="PF07303">
    <property type="entry name" value="Occludin_ELL"/>
    <property type="match status" value="1"/>
</dbReference>
<dbReference type="PIRSF" id="PIRSF005993">
    <property type="entry name" value="Occludin"/>
    <property type="match status" value="1"/>
</dbReference>
<dbReference type="PRINTS" id="PR01258">
    <property type="entry name" value="OCCLUDIN"/>
</dbReference>
<dbReference type="SUPFAM" id="SSF144292">
    <property type="entry name" value="occludin/ELL-like"/>
    <property type="match status" value="1"/>
</dbReference>
<dbReference type="PROSITE" id="PS51225">
    <property type="entry name" value="MARVEL"/>
    <property type="match status" value="1"/>
</dbReference>
<dbReference type="PROSITE" id="PS51980">
    <property type="entry name" value="OCEL"/>
    <property type="match status" value="1"/>
</dbReference>
<organism>
    <name type="scientific">Mus musculus</name>
    <name type="common">Mouse</name>
    <dbReference type="NCBI Taxonomy" id="10090"/>
    <lineage>
        <taxon>Eukaryota</taxon>
        <taxon>Metazoa</taxon>
        <taxon>Chordata</taxon>
        <taxon>Craniata</taxon>
        <taxon>Vertebrata</taxon>
        <taxon>Euteleostomi</taxon>
        <taxon>Mammalia</taxon>
        <taxon>Eutheria</taxon>
        <taxon>Euarchontoglires</taxon>
        <taxon>Glires</taxon>
        <taxon>Rodentia</taxon>
        <taxon>Myomorpha</taxon>
        <taxon>Muroidea</taxon>
        <taxon>Muridae</taxon>
        <taxon>Murinae</taxon>
        <taxon>Mus</taxon>
        <taxon>Mus</taxon>
    </lineage>
</organism>
<comment type="function">
    <text>May play a role in the formation and regulation of the tight junction (TJ) paracellular permeability barrier.</text>
</comment>
<comment type="subunit">
    <text evidence="8 11">Interacts with TJP1/ZO1. Interacts with VAPA. Interacts with CLDN1, CLDN6, CLDN9, CLDN11, CLDN12 and CLDN17. Interacts with PLSCR1. Interacts with LSR, ILDR1 and ILDR2. Interacts with TJP2/ZO2 (PubMed:10026224).</text>
</comment>
<comment type="subcellular location">
    <subcellularLocation>
        <location evidence="12">Cell membrane</location>
        <topology evidence="3">Multi-pass membrane protein</topology>
    </subcellularLocation>
    <subcellularLocation>
        <location evidence="11">Cell junction</location>
        <location evidence="11">Tight junction</location>
    </subcellularLocation>
</comment>
<comment type="tissue specificity">
    <text>Localized at tight junctions of both epithelial and endothelial cells. Highly expressed in the testis, kidney, lung, liver and brain. Not detected in skeletal muscle, spleen and heart.</text>
</comment>
<comment type="developmental stage">
    <text>Found diffusely on the lateral membranes of Sertoli cells in the early prepubertal period. With development, became gradually concentrated at the most basal regions of Sertoli cells.</text>
</comment>
<comment type="domain">
    <text evidence="1">The C-terminal is cytoplasmic and is important for interaction with ZO-1. Necessary for the tight junction localization. Involved in the regulation of the permeability barrier function of the tight junction (By similarity).</text>
</comment>
<comment type="PTM">
    <text evidence="1 10">Dephosphorylated by PTPRJ (By similarity). May be phosphorylated by PKC during translocation to cell-cell contacts.</text>
</comment>
<comment type="disruption phenotype">
    <text evidence="9">Mice have a complex phenotype including abnormalities of salivary gland, gastric epithelium, bone, testis and intracranial calcification.</text>
</comment>
<comment type="similarity">
    <text evidence="13">Belongs to the ELL/occludin family.</text>
</comment>
<gene>
    <name type="primary">Ocln</name>
    <name type="synonym">Ocl</name>
</gene>
<reference key="1">
    <citation type="journal article" date="1996" name="J. Cell Biol.">
        <title>Interspecies diversity of the occludin sequence: cDNA cloning of human, mouse, dog, and rat-kangaroo homologues.</title>
        <authorList>
            <person name="Ando-Akatsuka Y."/>
            <person name="Saitou M."/>
            <person name="Hirase T."/>
            <person name="Kishi M."/>
            <person name="Sakakibara A."/>
            <person name="Itoh M."/>
            <person name="Yonemura S."/>
            <person name="Furuse M."/>
            <person name="Tsukita S."/>
        </authorList>
    </citation>
    <scope>NUCLEOTIDE SEQUENCE [MRNA]</scope>
    <source>
        <tissue>Lung</tissue>
    </source>
</reference>
<reference key="2">
    <citation type="journal article" date="2005" name="Science">
        <title>The transcriptional landscape of the mammalian genome.</title>
        <authorList>
            <person name="Carninci P."/>
            <person name="Kasukawa T."/>
            <person name="Katayama S."/>
            <person name="Gough J."/>
            <person name="Frith M.C."/>
            <person name="Maeda N."/>
            <person name="Oyama R."/>
            <person name="Ravasi T."/>
            <person name="Lenhard B."/>
            <person name="Wells C."/>
            <person name="Kodzius R."/>
            <person name="Shimokawa K."/>
            <person name="Bajic V.B."/>
            <person name="Brenner S.E."/>
            <person name="Batalov S."/>
            <person name="Forrest A.R."/>
            <person name="Zavolan M."/>
            <person name="Davis M.J."/>
            <person name="Wilming L.G."/>
            <person name="Aidinis V."/>
            <person name="Allen J.E."/>
            <person name="Ambesi-Impiombato A."/>
            <person name="Apweiler R."/>
            <person name="Aturaliya R.N."/>
            <person name="Bailey T.L."/>
            <person name="Bansal M."/>
            <person name="Baxter L."/>
            <person name="Beisel K.W."/>
            <person name="Bersano T."/>
            <person name="Bono H."/>
            <person name="Chalk A.M."/>
            <person name="Chiu K.P."/>
            <person name="Choudhary V."/>
            <person name="Christoffels A."/>
            <person name="Clutterbuck D.R."/>
            <person name="Crowe M.L."/>
            <person name="Dalla E."/>
            <person name="Dalrymple B.P."/>
            <person name="de Bono B."/>
            <person name="Della Gatta G."/>
            <person name="di Bernardo D."/>
            <person name="Down T."/>
            <person name="Engstrom P."/>
            <person name="Fagiolini M."/>
            <person name="Faulkner G."/>
            <person name="Fletcher C.F."/>
            <person name="Fukushima T."/>
            <person name="Furuno M."/>
            <person name="Futaki S."/>
            <person name="Gariboldi M."/>
            <person name="Georgii-Hemming P."/>
            <person name="Gingeras T.R."/>
            <person name="Gojobori T."/>
            <person name="Green R.E."/>
            <person name="Gustincich S."/>
            <person name="Harbers M."/>
            <person name="Hayashi Y."/>
            <person name="Hensch T.K."/>
            <person name="Hirokawa N."/>
            <person name="Hill D."/>
            <person name="Huminiecki L."/>
            <person name="Iacono M."/>
            <person name="Ikeo K."/>
            <person name="Iwama A."/>
            <person name="Ishikawa T."/>
            <person name="Jakt M."/>
            <person name="Kanapin A."/>
            <person name="Katoh M."/>
            <person name="Kawasawa Y."/>
            <person name="Kelso J."/>
            <person name="Kitamura H."/>
            <person name="Kitano H."/>
            <person name="Kollias G."/>
            <person name="Krishnan S.P."/>
            <person name="Kruger A."/>
            <person name="Kummerfeld S.K."/>
            <person name="Kurochkin I.V."/>
            <person name="Lareau L.F."/>
            <person name="Lazarevic D."/>
            <person name="Lipovich L."/>
            <person name="Liu J."/>
            <person name="Liuni S."/>
            <person name="McWilliam S."/>
            <person name="Madan Babu M."/>
            <person name="Madera M."/>
            <person name="Marchionni L."/>
            <person name="Matsuda H."/>
            <person name="Matsuzawa S."/>
            <person name="Miki H."/>
            <person name="Mignone F."/>
            <person name="Miyake S."/>
            <person name="Morris K."/>
            <person name="Mottagui-Tabar S."/>
            <person name="Mulder N."/>
            <person name="Nakano N."/>
            <person name="Nakauchi H."/>
            <person name="Ng P."/>
            <person name="Nilsson R."/>
            <person name="Nishiguchi S."/>
            <person name="Nishikawa S."/>
            <person name="Nori F."/>
            <person name="Ohara O."/>
            <person name="Okazaki Y."/>
            <person name="Orlando V."/>
            <person name="Pang K.C."/>
            <person name="Pavan W.J."/>
            <person name="Pavesi G."/>
            <person name="Pesole G."/>
            <person name="Petrovsky N."/>
            <person name="Piazza S."/>
            <person name="Reed J."/>
            <person name="Reid J.F."/>
            <person name="Ring B.Z."/>
            <person name="Ringwald M."/>
            <person name="Rost B."/>
            <person name="Ruan Y."/>
            <person name="Salzberg S.L."/>
            <person name="Sandelin A."/>
            <person name="Schneider C."/>
            <person name="Schoenbach C."/>
            <person name="Sekiguchi K."/>
            <person name="Semple C.A."/>
            <person name="Seno S."/>
            <person name="Sessa L."/>
            <person name="Sheng Y."/>
            <person name="Shibata Y."/>
            <person name="Shimada H."/>
            <person name="Shimada K."/>
            <person name="Silva D."/>
            <person name="Sinclair B."/>
            <person name="Sperling S."/>
            <person name="Stupka E."/>
            <person name="Sugiura K."/>
            <person name="Sultana R."/>
            <person name="Takenaka Y."/>
            <person name="Taki K."/>
            <person name="Tammoja K."/>
            <person name="Tan S.L."/>
            <person name="Tang S."/>
            <person name="Taylor M.S."/>
            <person name="Tegner J."/>
            <person name="Teichmann S.A."/>
            <person name="Ueda H.R."/>
            <person name="van Nimwegen E."/>
            <person name="Verardo R."/>
            <person name="Wei C.L."/>
            <person name="Yagi K."/>
            <person name="Yamanishi H."/>
            <person name="Zabarovsky E."/>
            <person name="Zhu S."/>
            <person name="Zimmer A."/>
            <person name="Hide W."/>
            <person name="Bult C."/>
            <person name="Grimmond S.M."/>
            <person name="Teasdale R.D."/>
            <person name="Liu E.T."/>
            <person name="Brusic V."/>
            <person name="Quackenbush J."/>
            <person name="Wahlestedt C."/>
            <person name="Mattick J.S."/>
            <person name="Hume D.A."/>
            <person name="Kai C."/>
            <person name="Sasaki D."/>
            <person name="Tomaru Y."/>
            <person name="Fukuda S."/>
            <person name="Kanamori-Katayama M."/>
            <person name="Suzuki M."/>
            <person name="Aoki J."/>
            <person name="Arakawa T."/>
            <person name="Iida J."/>
            <person name="Imamura K."/>
            <person name="Itoh M."/>
            <person name="Kato T."/>
            <person name="Kawaji H."/>
            <person name="Kawagashira N."/>
            <person name="Kawashima T."/>
            <person name="Kojima M."/>
            <person name="Kondo S."/>
            <person name="Konno H."/>
            <person name="Nakano K."/>
            <person name="Ninomiya N."/>
            <person name="Nishio T."/>
            <person name="Okada M."/>
            <person name="Plessy C."/>
            <person name="Shibata K."/>
            <person name="Shiraki T."/>
            <person name="Suzuki S."/>
            <person name="Tagami M."/>
            <person name="Waki K."/>
            <person name="Watahiki A."/>
            <person name="Okamura-Oho Y."/>
            <person name="Suzuki H."/>
            <person name="Kawai J."/>
            <person name="Hayashizaki Y."/>
        </authorList>
    </citation>
    <scope>NUCLEOTIDE SEQUENCE [LARGE SCALE MRNA]</scope>
    <source>
        <strain>C57BL/6J</strain>
        <tissue>Cerebellum</tissue>
        <tissue>Ovary</tissue>
        <tissue>Uterus</tissue>
    </source>
</reference>
<reference key="3">
    <citation type="journal article" date="1999" name="J. Biol. Chem.">
        <title>Characterization of ZO-2 as a MAGUK family member associated with tight as well as adherens junctions with a binding affinity to occludin and alpha catenin.</title>
        <authorList>
            <person name="Itoh M."/>
            <person name="Morita K."/>
            <person name="Tsukita S."/>
        </authorList>
    </citation>
    <scope>INTERACTION WITH TJP2</scope>
</reference>
<reference key="4">
    <citation type="journal article" date="2000" name="Mol. Biol. Cell">
        <title>Complex phenotype of mice lacking occludin, a component of tight junction strands.</title>
        <authorList>
            <person name="Saitou M."/>
            <person name="Furuse M."/>
            <person name="Sasaki H."/>
            <person name="Schulzke J.D."/>
            <person name="Fromm M."/>
            <person name="Takano H."/>
            <person name="Noda T."/>
            <person name="Tsukita S."/>
        </authorList>
    </citation>
    <scope>DISRUPTION PHENOTYPE</scope>
</reference>
<reference key="5">
    <citation type="journal article" date="2001" name="J. Biol. Chem.">
        <title>Protein kinase C regulates the phosphorylation and cellular localization of occludin.</title>
        <authorList>
            <person name="Andreeva A.Y."/>
            <person name="Krause E."/>
            <person name="Mueller E.-C."/>
            <person name="Blasig I.E."/>
            <person name="Utepbergenov D.I."/>
        </authorList>
    </citation>
    <scope>PHOSPHORYLATION AT SER-338</scope>
    <scope>IDENTIFICATION BY MASS SPECTROMETRY</scope>
</reference>
<reference key="6">
    <citation type="journal article" date="2010" name="Cell">
        <title>A tissue-specific atlas of mouse protein phosphorylation and expression.</title>
        <authorList>
            <person name="Huttlin E.L."/>
            <person name="Jedrychowski M.P."/>
            <person name="Elias J.E."/>
            <person name="Goswami T."/>
            <person name="Rad R."/>
            <person name="Beausoleil S.A."/>
            <person name="Villen J."/>
            <person name="Haas W."/>
            <person name="Sowa M.E."/>
            <person name="Gygi S.P."/>
        </authorList>
    </citation>
    <scope>PHOSPHORYLATION [LARGE SCALE ANALYSIS] AT SER-300; THR-303; SER-311; SER-358; SER-368; SER-369; THR-403 AND SER-407</scope>
    <scope>IDENTIFICATION BY MASS SPECTROMETRY [LARGE SCALE ANALYSIS]</scope>
    <source>
        <tissue>Brain</tissue>
        <tissue>Kidney</tissue>
        <tissue>Lung</tissue>
        <tissue>Pancreas</tissue>
        <tissue>Testis</tissue>
    </source>
</reference>
<reference key="7">
    <citation type="journal article" date="2013" name="J. Cell Sci.">
        <title>Analysis of the 'angulin' proteins LSR, ILDR1 and ILDR2--tricellulin recruitment, epithelial barrier function and implication in deafness pathogenesis.</title>
        <authorList>
            <person name="Higashi T."/>
            <person name="Tokuda S."/>
            <person name="Kitajiri S."/>
            <person name="Masuda S."/>
            <person name="Nakamura H."/>
            <person name="Oda Y."/>
            <person name="Furuse M."/>
        </authorList>
    </citation>
    <scope>INTERACTION WITH LSR</scope>
    <scope>ILDR1 AND ILDR2</scope>
    <scope>SUBCELLULAR LOCATION</scope>
</reference>
<reference key="8">
    <citation type="journal article" date="2014" name="Am. J. Respir. Cell Mol. Biol.">
        <title>Knockout mice reveal key roles for claudin 18 in alveolar barrier properties and fluid homeostasis.</title>
        <authorList>
            <person name="Li G."/>
            <person name="Flodby P."/>
            <person name="Luo J."/>
            <person name="Kage H."/>
            <person name="Sipos A."/>
            <person name="Gao D."/>
            <person name="Ji Y."/>
            <person name="Beard L.L."/>
            <person name="Marconett C.N."/>
            <person name="DeMaio L."/>
            <person name="Kim Y.H."/>
            <person name="Kim K.J."/>
            <person name="Laird-Offringa I.A."/>
            <person name="Minoo P."/>
            <person name="Liebler J.M."/>
            <person name="Zhou B."/>
            <person name="Crandall E.D."/>
            <person name="Borok Z."/>
        </authorList>
    </citation>
    <scope>SUBCELLULAR LOCATION</scope>
</reference>
<accession>Q61146</accession>
<accession>Q544A7</accession>
<name>OCLN_MOUSE</name>
<evidence type="ECO:0000250" key="1"/>
<evidence type="ECO:0000250" key="2">
    <source>
        <dbReference type="UniProtKB" id="Q16625"/>
    </source>
</evidence>
<evidence type="ECO:0000255" key="3"/>
<evidence type="ECO:0000255" key="4">
    <source>
        <dbReference type="PROSITE-ProRule" id="PRU00114"/>
    </source>
</evidence>
<evidence type="ECO:0000255" key="5">
    <source>
        <dbReference type="PROSITE-ProRule" id="PRU00581"/>
    </source>
</evidence>
<evidence type="ECO:0000255" key="6">
    <source>
        <dbReference type="PROSITE-ProRule" id="PRU01324"/>
    </source>
</evidence>
<evidence type="ECO:0000256" key="7">
    <source>
        <dbReference type="SAM" id="MobiDB-lite"/>
    </source>
</evidence>
<evidence type="ECO:0000269" key="8">
    <source>
    </source>
</evidence>
<evidence type="ECO:0000269" key="9">
    <source>
    </source>
</evidence>
<evidence type="ECO:0000269" key="10">
    <source>
    </source>
</evidence>
<evidence type="ECO:0000269" key="11">
    <source>
    </source>
</evidence>
<evidence type="ECO:0000269" key="12">
    <source>
    </source>
</evidence>
<evidence type="ECO:0000305" key="13"/>
<evidence type="ECO:0007744" key="14">
    <source>
    </source>
</evidence>
<keyword id="KW-0965">Cell junction</keyword>
<keyword id="KW-1003">Cell membrane</keyword>
<keyword id="KW-0175">Coiled coil</keyword>
<keyword id="KW-1015">Disulfide bond</keyword>
<keyword id="KW-0472">Membrane</keyword>
<keyword id="KW-0597">Phosphoprotein</keyword>
<keyword id="KW-1185">Reference proteome</keyword>
<keyword id="KW-0796">Tight junction</keyword>
<keyword id="KW-0812">Transmembrane</keyword>
<keyword id="KW-1133">Transmembrane helix</keyword>
<sequence length="521" mass="59000">MSVRPFESPPPYRPDEFKPNHYAPSNDMYGGEMHVRPMLSQPAYSFYPEDEILHFYKWTSPPGVIRILSMLIIVMCIAIFACVASTLAWDRGYGTGLFGGSLNYPYSGFGYGGGYGGGYGGYGYGYGGYTDPRAAKGFLLAMAAFCFIASLVIFVTSVIRSGMSRTRRYYLIVIIVSAILGIMVFIATIVYIMGVNPTAQASGSMYGSQIYMICNQFYTPGGTGLYVDQYLYHYCVVDPQEAIAIVLGFMIIVAFALIIFFAVKTRRKMDRYDKSNILWDKEHIYDEQPPNVEEWVKNVSAGTQDMPPPPSDYAERVDSPMAYSSNGKVNGKRSYPESFYKSTPLVPEVAQEIPLTLSVDDFRQPRYSSNGNLETPSKRAPTKGKAGKGKRTDPDHYETDYTTGGESCEELEEDWVREYPPITSDQQRQLYKRNFDAGLQEYKSLQAELDDVNKELSRLDKELDDYREESEEYMAAADEYNRLKQVKGSADYKSKRNYCKQLKSKLSHIKRMVGDYDRRKP</sequence>
<feature type="chain" id="PRO_0000146740" description="Occludin">
    <location>
        <begin position="1"/>
        <end position="521"/>
    </location>
</feature>
<feature type="topological domain" description="Cytoplasmic" evidence="3">
    <location>
        <begin position="1"/>
        <end position="66"/>
    </location>
</feature>
<feature type="transmembrane region" description="Helical" evidence="3">
    <location>
        <begin position="67"/>
        <end position="89"/>
    </location>
</feature>
<feature type="topological domain" description="Extracellular" evidence="3">
    <location>
        <begin position="90"/>
        <end position="133"/>
    </location>
</feature>
<feature type="transmembrane region" description="Helical" evidence="3">
    <location>
        <begin position="134"/>
        <end position="158"/>
    </location>
</feature>
<feature type="topological domain" description="Cytoplasmic" evidence="3">
    <location>
        <begin position="159"/>
        <end position="168"/>
    </location>
</feature>
<feature type="transmembrane region" description="Helical" evidence="3">
    <location>
        <begin position="169"/>
        <end position="193"/>
    </location>
</feature>
<feature type="topological domain" description="Extracellular" evidence="3">
    <location>
        <begin position="194"/>
        <end position="241"/>
    </location>
</feature>
<feature type="transmembrane region" description="Helical" evidence="3">
    <location>
        <begin position="242"/>
        <end position="263"/>
    </location>
</feature>
<feature type="topological domain" description="Cytoplasmic" evidence="3">
    <location>
        <begin position="264"/>
        <end position="521"/>
    </location>
</feature>
<feature type="domain" description="MARVEL" evidence="5">
    <location>
        <begin position="60"/>
        <end position="267"/>
    </location>
</feature>
<feature type="domain" description="OCEL" evidence="6">
    <location>
        <begin position="413"/>
        <end position="521"/>
    </location>
</feature>
<feature type="region of interest" description="Disordered" evidence="7">
    <location>
        <begin position="1"/>
        <end position="20"/>
    </location>
</feature>
<feature type="region of interest" description="Disordered" evidence="7">
    <location>
        <begin position="300"/>
        <end position="329"/>
    </location>
</feature>
<feature type="region of interest" description="Disordered" evidence="7">
    <location>
        <begin position="361"/>
        <end position="405"/>
    </location>
</feature>
<feature type="coiled-coil region" evidence="3">
    <location>
        <begin position="424"/>
        <end position="488"/>
    </location>
</feature>
<feature type="compositionally biased region" description="Polar residues" evidence="7">
    <location>
        <begin position="366"/>
        <end position="375"/>
    </location>
</feature>
<feature type="compositionally biased region" description="Basic residues" evidence="7">
    <location>
        <begin position="380"/>
        <end position="389"/>
    </location>
</feature>
<feature type="compositionally biased region" description="Basic and acidic residues" evidence="7">
    <location>
        <begin position="390"/>
        <end position="399"/>
    </location>
</feature>
<feature type="modified residue" description="Phosphoserine" evidence="14">
    <location>
        <position position="300"/>
    </location>
</feature>
<feature type="modified residue" description="Phosphothreonine" evidence="14">
    <location>
        <position position="303"/>
    </location>
</feature>
<feature type="modified residue" description="Phosphoserine" evidence="14">
    <location>
        <position position="311"/>
    </location>
</feature>
<feature type="modified residue" description="Phosphoserine" evidence="2">
    <location>
        <position position="319"/>
    </location>
</feature>
<feature type="modified residue" description="Phosphoserine; by PKC; in vitro" evidence="10">
    <location>
        <position position="338"/>
    </location>
</feature>
<feature type="modified residue" description="Phosphoserine" evidence="14">
    <location>
        <position position="358"/>
    </location>
</feature>
<feature type="modified residue" description="Phosphotyrosine" evidence="2">
    <location>
        <position position="367"/>
    </location>
</feature>
<feature type="modified residue" description="Phosphoserine" evidence="14">
    <location>
        <position position="368"/>
    </location>
</feature>
<feature type="modified residue" description="Phosphoserine" evidence="14">
    <location>
        <position position="369"/>
    </location>
</feature>
<feature type="modified residue" description="Phosphotyrosine" evidence="2">
    <location>
        <position position="397"/>
    </location>
</feature>
<feature type="modified residue" description="Phosphotyrosine" evidence="2">
    <location>
        <position position="401"/>
    </location>
</feature>
<feature type="modified residue" description="Phosphothreonine; by PKC/PRKCH" evidence="2">
    <location>
        <position position="402"/>
    </location>
</feature>
<feature type="modified residue" description="Phosphothreonine" evidence="14">
    <location>
        <position position="403"/>
    </location>
</feature>
<feature type="modified residue" description="Phosphoserine" evidence="14">
    <location>
        <position position="407"/>
    </location>
</feature>
<feature type="modified residue" description="Phosphoserine" evidence="2">
    <location>
        <position position="489"/>
    </location>
</feature>
<feature type="disulfide bond" evidence="4">
    <location>
        <begin position="214"/>
        <end position="235"/>
    </location>
</feature>